<reference key="1">
    <citation type="journal article" date="2005" name="Nucleic Acids Res.">
        <title>Genome dynamics and diversity of Shigella species, the etiologic agents of bacillary dysentery.</title>
        <authorList>
            <person name="Yang F."/>
            <person name="Yang J."/>
            <person name="Zhang X."/>
            <person name="Chen L."/>
            <person name="Jiang Y."/>
            <person name="Yan Y."/>
            <person name="Tang X."/>
            <person name="Wang J."/>
            <person name="Xiong Z."/>
            <person name="Dong J."/>
            <person name="Xue Y."/>
            <person name="Zhu Y."/>
            <person name="Xu X."/>
            <person name="Sun L."/>
            <person name="Chen S."/>
            <person name="Nie H."/>
            <person name="Peng J."/>
            <person name="Xu J."/>
            <person name="Wang Y."/>
            <person name="Yuan Z."/>
            <person name="Wen Y."/>
            <person name="Yao Z."/>
            <person name="Shen Y."/>
            <person name="Qiang B."/>
            <person name="Hou Y."/>
            <person name="Yu J."/>
            <person name="Jin Q."/>
        </authorList>
    </citation>
    <scope>NUCLEOTIDE SEQUENCE [LARGE SCALE GENOMIC DNA]</scope>
    <source>
        <strain>Sd197</strain>
    </source>
</reference>
<feature type="chain" id="PRO_1000064516" description="Glucans biosynthesis protein C">
    <location>
        <begin position="1"/>
        <end position="385"/>
    </location>
</feature>
<feature type="transmembrane region" description="Helical" evidence="1">
    <location>
        <begin position="17"/>
        <end position="37"/>
    </location>
</feature>
<feature type="transmembrane region" description="Helical" evidence="1">
    <location>
        <begin position="60"/>
        <end position="80"/>
    </location>
</feature>
<feature type="transmembrane region" description="Helical" evidence="1">
    <location>
        <begin position="91"/>
        <end position="111"/>
    </location>
</feature>
<feature type="transmembrane region" description="Helical" evidence="1">
    <location>
        <begin position="137"/>
        <end position="157"/>
    </location>
</feature>
<feature type="transmembrane region" description="Helical" evidence="1">
    <location>
        <begin position="173"/>
        <end position="193"/>
    </location>
</feature>
<feature type="transmembrane region" description="Helical" evidence="1">
    <location>
        <begin position="212"/>
        <end position="232"/>
    </location>
</feature>
<feature type="transmembrane region" description="Helical" evidence="1">
    <location>
        <begin position="239"/>
        <end position="259"/>
    </location>
</feature>
<feature type="transmembrane region" description="Helical" evidence="1">
    <location>
        <begin position="274"/>
        <end position="294"/>
    </location>
</feature>
<feature type="transmembrane region" description="Helical" evidence="1">
    <location>
        <begin position="311"/>
        <end position="331"/>
    </location>
</feature>
<feature type="transmembrane region" description="Helical" evidence="1">
    <location>
        <begin position="338"/>
        <end position="358"/>
    </location>
</feature>
<gene>
    <name evidence="1" type="primary">mdoC</name>
    <name evidence="1" type="synonym">opgC</name>
    <name type="ordered locus">SDY_2303</name>
</gene>
<sequence>MNPVPAQREYFLDSIRAWLMLLGIPFHISLIYSSHTWHVNSTEPSLWLTLFNDFIHSFRMQVFFVISGYFSYMLFLRYPLKKWWKVRVERVGIPMLTAIPLLTLPQFIMLQYVKGKTKSWPGLSLYDKYNTLAWELISHLWFLLVLVVMTTLCVWIFKRIRNNLENSDKTNKKFSMVKLSVIFLCLGIGYAVIRRTIFIVYPPILSNGMFNFIVMQTLFYLPFFILGALAFIFPHLKALFTTPSRGCTLAAALAFVAYLLNQRYGSGDAWMYETESVITMVLGLWMVNVVFSFGHRLLNFQSARVTYFVNASLFIYLVHHPLTLFFGAYITPHITSNWLGFLCGLIFVVGIAIILYEIHLRIPLLKFLFSGKPVVKRENDKAPAR</sequence>
<proteinExistence type="inferred from homology"/>
<name>OPGC_SHIDS</name>
<organism>
    <name type="scientific">Shigella dysenteriae serotype 1 (strain Sd197)</name>
    <dbReference type="NCBI Taxonomy" id="300267"/>
    <lineage>
        <taxon>Bacteria</taxon>
        <taxon>Pseudomonadati</taxon>
        <taxon>Pseudomonadota</taxon>
        <taxon>Gammaproteobacteria</taxon>
        <taxon>Enterobacterales</taxon>
        <taxon>Enterobacteriaceae</taxon>
        <taxon>Shigella</taxon>
    </lineage>
</organism>
<keyword id="KW-0012">Acyltransferase</keyword>
<keyword id="KW-1003">Cell membrane</keyword>
<keyword id="KW-0472">Membrane</keyword>
<keyword id="KW-1185">Reference proteome</keyword>
<keyword id="KW-0808">Transferase</keyword>
<keyword id="KW-0812">Transmembrane</keyword>
<keyword id="KW-1133">Transmembrane helix</keyword>
<comment type="function">
    <text evidence="1">Necessary for the succinyl substitution of periplasmic glucans. Could catalyze the transfer of succinyl residues from the cytoplasmic side of the membrane to the nascent glucan backbones on the periplasmic side of the membrane.</text>
</comment>
<comment type="pathway">
    <text evidence="1">Glycan metabolism; osmoregulated periplasmic glucan (OPG) biosynthesis.</text>
</comment>
<comment type="subcellular location">
    <subcellularLocation>
        <location evidence="1">Cell membrane</location>
        <topology evidence="1">Multi-pass membrane protein</topology>
    </subcellularLocation>
</comment>
<comment type="similarity">
    <text evidence="1">Belongs to the acyltransferase 3 family. OpgC subfamily.</text>
</comment>
<evidence type="ECO:0000255" key="1">
    <source>
        <dbReference type="HAMAP-Rule" id="MF_01066"/>
    </source>
</evidence>
<accession>Q32E75</accession>
<dbReference type="EC" id="2.1.-.-" evidence="1"/>
<dbReference type="EMBL" id="CP000034">
    <property type="protein sequence ID" value="ABB62380.1"/>
    <property type="molecule type" value="Genomic_DNA"/>
</dbReference>
<dbReference type="RefSeq" id="WP_001070377.1">
    <property type="nucleotide sequence ID" value="NC_007606.1"/>
</dbReference>
<dbReference type="RefSeq" id="YP_403871.1">
    <property type="nucleotide sequence ID" value="NC_007606.1"/>
</dbReference>
<dbReference type="STRING" id="300267.SDY_2303"/>
<dbReference type="EnsemblBacteria" id="ABB62380">
    <property type="protein sequence ID" value="ABB62380"/>
    <property type="gene ID" value="SDY_2303"/>
</dbReference>
<dbReference type="KEGG" id="sdy:SDY_2303"/>
<dbReference type="PATRIC" id="fig|300267.13.peg.2780"/>
<dbReference type="HOGENOM" id="CLU_036182_2_0_6"/>
<dbReference type="UniPathway" id="UPA00637"/>
<dbReference type="Proteomes" id="UP000002716">
    <property type="component" value="Chromosome"/>
</dbReference>
<dbReference type="GO" id="GO:0005886">
    <property type="term" value="C:plasma membrane"/>
    <property type="evidence" value="ECO:0007669"/>
    <property type="project" value="UniProtKB-SubCell"/>
</dbReference>
<dbReference type="GO" id="GO:0016747">
    <property type="term" value="F:acyltransferase activity, transferring groups other than amino-acyl groups"/>
    <property type="evidence" value="ECO:0007669"/>
    <property type="project" value="InterPro"/>
</dbReference>
<dbReference type="GO" id="GO:0016741">
    <property type="term" value="F:transferase activity, transferring one-carbon groups"/>
    <property type="evidence" value="ECO:0007669"/>
    <property type="project" value="UniProtKB-UniRule"/>
</dbReference>
<dbReference type="GO" id="GO:0009250">
    <property type="term" value="P:glucan biosynthetic process"/>
    <property type="evidence" value="ECO:0007669"/>
    <property type="project" value="UniProtKB-UniRule"/>
</dbReference>
<dbReference type="HAMAP" id="MF_01066">
    <property type="entry name" value="MdoC_OpgC"/>
    <property type="match status" value="1"/>
</dbReference>
<dbReference type="InterPro" id="IPR002656">
    <property type="entry name" value="Acyl_transf_3_dom"/>
</dbReference>
<dbReference type="InterPro" id="IPR050623">
    <property type="entry name" value="Glucan_succinyl_AcylTrfase"/>
</dbReference>
<dbReference type="InterPro" id="IPR023723">
    <property type="entry name" value="Glucans_biosynth_C"/>
</dbReference>
<dbReference type="NCBIfam" id="NF003014">
    <property type="entry name" value="PRK03854.1"/>
    <property type="match status" value="1"/>
</dbReference>
<dbReference type="PANTHER" id="PTHR36927">
    <property type="entry name" value="BLR4337 PROTEIN"/>
    <property type="match status" value="1"/>
</dbReference>
<dbReference type="PANTHER" id="PTHR36927:SF3">
    <property type="entry name" value="GLUCANS BIOSYNTHESIS PROTEIN C"/>
    <property type="match status" value="1"/>
</dbReference>
<dbReference type="Pfam" id="PF01757">
    <property type="entry name" value="Acyl_transf_3"/>
    <property type="match status" value="1"/>
</dbReference>
<protein>
    <recommendedName>
        <fullName evidence="1">Glucans biosynthesis protein C</fullName>
        <ecNumber evidence="1">2.1.-.-</ecNumber>
    </recommendedName>
</protein>